<reference key="1">
    <citation type="submission" date="2009-02" db="EMBL/GenBank/DDBJ databases">
        <title>Genome sequence of Bacillus cereus 03BB102.</title>
        <authorList>
            <person name="Dodson R.J."/>
            <person name="Jackson P."/>
            <person name="Munk A.C."/>
            <person name="Brettin T."/>
            <person name="Bruce D."/>
            <person name="Detter C."/>
            <person name="Tapia R."/>
            <person name="Han C."/>
            <person name="Sutton G."/>
            <person name="Sims D."/>
        </authorList>
    </citation>
    <scope>NUCLEOTIDE SEQUENCE [LARGE SCALE GENOMIC DNA]</scope>
    <source>
        <strain>03BB102</strain>
    </source>
</reference>
<sequence length="420" mass="48784">MTKWKRANPNGTRDYLFEECTLIEEVEQKLRRTFLERGYEEIRTPTIEFYDVFAFQSRPIDEEKMYKFFDEKGRIIVLRPDMTIPLARVVGTQRCDTPLKVTYSGNVFRANESLAGKYNEIVQSGIEVIGIDNVRAEIECVISVIQSLQKLKVQSFTIEIGQVQLYKCIVKKLSIHEEEEKVLRTYIESKNYASLSNFIRDKKLDRCDETVKLLEKLPRLFGNLEVIEEAEKLASSNEMKMAITRVKEIYEAIEKLGYGSYISIDLGMIQHLDYYTGVIFKGYIYEIGEEIVSGGRYDELIGNFGEMLPAVGLAVQVNQIVKALQEQQEPYERKRIDIMIHYELNRLAEAERLRNLLQKDGKKVALSLFSNLNDTFQFARKNQIVTVVEAKSESLVEYVWKEKWVVQKEGETSCVTFKLR</sequence>
<proteinExistence type="inferred from homology"/>
<dbReference type="EMBL" id="CP001407">
    <property type="protein sequence ID" value="ACO27689.1"/>
    <property type="molecule type" value="Genomic_DNA"/>
</dbReference>
<dbReference type="RefSeq" id="WP_000170325.1">
    <property type="nucleotide sequence ID" value="NZ_CP009318.1"/>
</dbReference>
<dbReference type="SMR" id="C1EMB3"/>
<dbReference type="KEGG" id="bcx:BCA_1459"/>
<dbReference type="PATRIC" id="fig|572264.18.peg.1409"/>
<dbReference type="UniPathway" id="UPA00031">
    <property type="reaction ID" value="UER00006"/>
</dbReference>
<dbReference type="Proteomes" id="UP000002210">
    <property type="component" value="Chromosome"/>
</dbReference>
<dbReference type="GO" id="GO:0005737">
    <property type="term" value="C:cytoplasm"/>
    <property type="evidence" value="ECO:0007669"/>
    <property type="project" value="UniProtKB-SubCell"/>
</dbReference>
<dbReference type="GO" id="GO:0140096">
    <property type="term" value="F:catalytic activity, acting on a protein"/>
    <property type="evidence" value="ECO:0007669"/>
    <property type="project" value="UniProtKB-ARBA"/>
</dbReference>
<dbReference type="GO" id="GO:0004821">
    <property type="term" value="F:histidine-tRNA ligase activity"/>
    <property type="evidence" value="ECO:0007669"/>
    <property type="project" value="TreeGrafter"/>
</dbReference>
<dbReference type="GO" id="GO:0016740">
    <property type="term" value="F:transferase activity"/>
    <property type="evidence" value="ECO:0007669"/>
    <property type="project" value="UniProtKB-ARBA"/>
</dbReference>
<dbReference type="GO" id="GO:0006427">
    <property type="term" value="P:histidyl-tRNA aminoacylation"/>
    <property type="evidence" value="ECO:0007669"/>
    <property type="project" value="TreeGrafter"/>
</dbReference>
<dbReference type="GO" id="GO:0000105">
    <property type="term" value="P:L-histidine biosynthetic process"/>
    <property type="evidence" value="ECO:0007669"/>
    <property type="project" value="UniProtKB-UniRule"/>
</dbReference>
<dbReference type="CDD" id="cd00773">
    <property type="entry name" value="HisRS-like_core"/>
    <property type="match status" value="1"/>
</dbReference>
<dbReference type="FunFam" id="3.30.930.10:FF:000060">
    <property type="entry name" value="ATP phosphoribosyltransferase regulatory subunit"/>
    <property type="match status" value="1"/>
</dbReference>
<dbReference type="Gene3D" id="3.30.930.10">
    <property type="entry name" value="Bira Bifunctional Protein, Domain 2"/>
    <property type="match status" value="1"/>
</dbReference>
<dbReference type="HAMAP" id="MF_00125">
    <property type="entry name" value="HisZ"/>
    <property type="match status" value="1"/>
</dbReference>
<dbReference type="InterPro" id="IPR006195">
    <property type="entry name" value="aa-tRNA-synth_II"/>
</dbReference>
<dbReference type="InterPro" id="IPR045864">
    <property type="entry name" value="aa-tRNA-synth_II/BPL/LPL"/>
</dbReference>
<dbReference type="InterPro" id="IPR041715">
    <property type="entry name" value="HisRS-like_core"/>
</dbReference>
<dbReference type="InterPro" id="IPR004516">
    <property type="entry name" value="HisRS/HisZ"/>
</dbReference>
<dbReference type="InterPro" id="IPR004517">
    <property type="entry name" value="HisZ"/>
</dbReference>
<dbReference type="NCBIfam" id="TIGR00443">
    <property type="entry name" value="hisZ_biosyn_reg"/>
    <property type="match status" value="1"/>
</dbReference>
<dbReference type="NCBIfam" id="NF008938">
    <property type="entry name" value="PRK12292.1-6"/>
    <property type="match status" value="1"/>
</dbReference>
<dbReference type="PANTHER" id="PTHR43707:SF6">
    <property type="entry name" value="ATP PHOSPHORIBOSYLTRANSFERASE REGULATORY SUBUNIT"/>
    <property type="match status" value="1"/>
</dbReference>
<dbReference type="PANTHER" id="PTHR43707">
    <property type="entry name" value="HISTIDYL-TRNA SYNTHETASE"/>
    <property type="match status" value="1"/>
</dbReference>
<dbReference type="Pfam" id="PF13393">
    <property type="entry name" value="tRNA-synt_His"/>
    <property type="match status" value="1"/>
</dbReference>
<dbReference type="PIRSF" id="PIRSF001549">
    <property type="entry name" value="His-tRNA_synth"/>
    <property type="match status" value="1"/>
</dbReference>
<dbReference type="SUPFAM" id="SSF55681">
    <property type="entry name" value="Class II aaRS and biotin synthetases"/>
    <property type="match status" value="1"/>
</dbReference>
<dbReference type="PROSITE" id="PS50862">
    <property type="entry name" value="AA_TRNA_LIGASE_II"/>
    <property type="match status" value="1"/>
</dbReference>
<protein>
    <recommendedName>
        <fullName evidence="1">ATP phosphoribosyltransferase regulatory subunit</fullName>
    </recommendedName>
</protein>
<gene>
    <name evidence="1" type="primary">hisZ</name>
    <name type="ordered locus">BCA_1459</name>
</gene>
<organism>
    <name type="scientific">Bacillus cereus (strain 03BB102)</name>
    <dbReference type="NCBI Taxonomy" id="572264"/>
    <lineage>
        <taxon>Bacteria</taxon>
        <taxon>Bacillati</taxon>
        <taxon>Bacillota</taxon>
        <taxon>Bacilli</taxon>
        <taxon>Bacillales</taxon>
        <taxon>Bacillaceae</taxon>
        <taxon>Bacillus</taxon>
        <taxon>Bacillus cereus group</taxon>
    </lineage>
</organism>
<evidence type="ECO:0000255" key="1">
    <source>
        <dbReference type="HAMAP-Rule" id="MF_00125"/>
    </source>
</evidence>
<accession>C1EMB3</accession>
<keyword id="KW-0028">Amino-acid biosynthesis</keyword>
<keyword id="KW-0963">Cytoplasm</keyword>
<keyword id="KW-0368">Histidine biosynthesis</keyword>
<name>HISZ_BACC3</name>
<feature type="chain" id="PRO_1000122662" description="ATP phosphoribosyltransferase regulatory subunit">
    <location>
        <begin position="1"/>
        <end position="420"/>
    </location>
</feature>
<comment type="function">
    <text evidence="1">Required for the first step of histidine biosynthesis. May allow the feedback regulation of ATP phosphoribosyltransferase activity by histidine.</text>
</comment>
<comment type="pathway">
    <text evidence="1">Amino-acid biosynthesis; L-histidine biosynthesis; L-histidine from 5-phospho-alpha-D-ribose 1-diphosphate: step 1/9.</text>
</comment>
<comment type="subunit">
    <text evidence="1">Heteromultimer composed of HisG and HisZ subunits.</text>
</comment>
<comment type="subcellular location">
    <subcellularLocation>
        <location evidence="1">Cytoplasm</location>
    </subcellularLocation>
</comment>
<comment type="miscellaneous">
    <text>This function is generally fulfilled by the C-terminal part of HisG, which is missing in some bacteria such as this one.</text>
</comment>
<comment type="similarity">
    <text evidence="1">Belongs to the class-II aminoacyl-tRNA synthetase family. HisZ subfamily.</text>
</comment>